<feature type="chain" id="PRO_0000258610" description="HTH-type transcriptional regulator ArgP">
    <location>
        <begin position="1"/>
        <end position="299"/>
    </location>
</feature>
<feature type="domain" description="HTH lysR-type" evidence="1">
    <location>
        <begin position="2"/>
        <end position="58"/>
    </location>
</feature>
<feature type="DNA-binding region" description="H-T-H motif" evidence="1">
    <location>
        <begin position="19"/>
        <end position="38"/>
    </location>
</feature>
<comment type="function">
    <text evidence="1">Controls the transcription of genes involved in arginine and lysine metabolism.</text>
</comment>
<comment type="subunit">
    <text evidence="1">Homodimer.</text>
</comment>
<comment type="similarity">
    <text evidence="2">Belongs to the LysR transcriptional regulatory family.</text>
</comment>
<protein>
    <recommendedName>
        <fullName evidence="1">HTH-type transcriptional regulator ArgP</fullName>
    </recommendedName>
</protein>
<organism>
    <name type="scientific">Pseudomonas fluorescens (strain ATCC BAA-477 / NRRL B-23932 / Pf-5)</name>
    <dbReference type="NCBI Taxonomy" id="220664"/>
    <lineage>
        <taxon>Bacteria</taxon>
        <taxon>Pseudomonadati</taxon>
        <taxon>Pseudomonadota</taxon>
        <taxon>Gammaproteobacteria</taxon>
        <taxon>Pseudomonadales</taxon>
        <taxon>Pseudomonadaceae</taxon>
        <taxon>Pseudomonas</taxon>
    </lineage>
</organism>
<name>ARGP_PSEF5</name>
<sequence length="299" mass="33223">MFDYKLLSALAAVIEQAGFERAAQVLGLSQSAISQRIKLLEARVGQPVLVRVTPPAPTEIGRRLLNHVQQVRLLERDLQSLVPALDEEGLPERLRIALNADSLATWWAGAVGDFCAEHHLLLDLVVEDQTVGLKRMRAGEVAACVCASERPVAGARSLLLGAMRYRAMASPEFIVRHFPQGVRAEQLPRTPALVFGPDDFLQHRYLASLGVDGAFEHHLCPSSEGFIRLTEAGLGWGLVPELQVREQLERGLLLELLPDKPIDVPLYWHHWRNGGQLLGLLTEHLARLSAQWLVPWEQP</sequence>
<reference key="1">
    <citation type="journal article" date="2005" name="Nat. Biotechnol.">
        <title>Complete genome sequence of the plant commensal Pseudomonas fluorescens Pf-5.</title>
        <authorList>
            <person name="Paulsen I.T."/>
            <person name="Press C.M."/>
            <person name="Ravel J."/>
            <person name="Kobayashi D.Y."/>
            <person name="Myers G.S.A."/>
            <person name="Mavrodi D.V."/>
            <person name="DeBoy R.T."/>
            <person name="Seshadri R."/>
            <person name="Ren Q."/>
            <person name="Madupu R."/>
            <person name="Dodson R.J."/>
            <person name="Durkin A.S."/>
            <person name="Brinkac L.M."/>
            <person name="Daugherty S.C."/>
            <person name="Sullivan S.A."/>
            <person name="Rosovitz M.J."/>
            <person name="Gwinn M.L."/>
            <person name="Zhou L."/>
            <person name="Schneider D.J."/>
            <person name="Cartinhour S.W."/>
            <person name="Nelson W.C."/>
            <person name="Weidman J."/>
            <person name="Watkins K."/>
            <person name="Tran K."/>
            <person name="Khouri H."/>
            <person name="Pierson E.A."/>
            <person name="Pierson L.S. III"/>
            <person name="Thomashow L.S."/>
            <person name="Loper J.E."/>
        </authorList>
    </citation>
    <scope>NUCLEOTIDE SEQUENCE [LARGE SCALE GENOMIC DNA]</scope>
    <source>
        <strain>ATCC BAA-477 / NRRL B-23932 / Pf-5</strain>
    </source>
</reference>
<evidence type="ECO:0000255" key="1">
    <source>
        <dbReference type="HAMAP-Rule" id="MF_00513"/>
    </source>
</evidence>
<evidence type="ECO:0000305" key="2"/>
<accession>Q4K779</accession>
<gene>
    <name evidence="1" type="primary">argP</name>
    <name type="synonym">iciA</name>
    <name type="ordered locus">PFL_4823</name>
</gene>
<keyword id="KW-0238">DNA-binding</keyword>
<keyword id="KW-0804">Transcription</keyword>
<keyword id="KW-0805">Transcription regulation</keyword>
<proteinExistence type="inferred from homology"/>
<dbReference type="EMBL" id="CP000076">
    <property type="protein sequence ID" value="AAY94053.1"/>
    <property type="molecule type" value="Genomic_DNA"/>
</dbReference>
<dbReference type="RefSeq" id="WP_011063077.1">
    <property type="nucleotide sequence ID" value="NC_004129.6"/>
</dbReference>
<dbReference type="SMR" id="Q4K779"/>
<dbReference type="STRING" id="220664.PFL_4823"/>
<dbReference type="KEGG" id="pfl:PFL_4823"/>
<dbReference type="PATRIC" id="fig|220664.5.peg.4935"/>
<dbReference type="eggNOG" id="COG0583">
    <property type="taxonomic scope" value="Bacteria"/>
</dbReference>
<dbReference type="HOGENOM" id="CLU_063829_0_0_6"/>
<dbReference type="Proteomes" id="UP000008540">
    <property type="component" value="Chromosome"/>
</dbReference>
<dbReference type="GO" id="GO:0003677">
    <property type="term" value="F:DNA binding"/>
    <property type="evidence" value="ECO:0007669"/>
    <property type="project" value="UniProtKB-UniRule"/>
</dbReference>
<dbReference type="GO" id="GO:0003700">
    <property type="term" value="F:DNA-binding transcription factor activity"/>
    <property type="evidence" value="ECO:0007669"/>
    <property type="project" value="UniProtKB-UniRule"/>
</dbReference>
<dbReference type="Gene3D" id="3.40.190.290">
    <property type="match status" value="1"/>
</dbReference>
<dbReference type="Gene3D" id="1.10.10.10">
    <property type="entry name" value="Winged helix-like DNA-binding domain superfamily/Winged helix DNA-binding domain"/>
    <property type="match status" value="1"/>
</dbReference>
<dbReference type="HAMAP" id="MF_00513">
    <property type="entry name" value="HTH_type_ArgP"/>
    <property type="match status" value="1"/>
</dbReference>
<dbReference type="InterPro" id="IPR017685">
    <property type="entry name" value="ArgP"/>
</dbReference>
<dbReference type="InterPro" id="IPR023490">
    <property type="entry name" value="ArgP_gammaproteobact"/>
</dbReference>
<dbReference type="InterPro" id="IPR050176">
    <property type="entry name" value="LTTR"/>
</dbReference>
<dbReference type="InterPro" id="IPR005119">
    <property type="entry name" value="LysR_subst-bd"/>
</dbReference>
<dbReference type="InterPro" id="IPR000847">
    <property type="entry name" value="Tscrpt_reg_HTH_LysR"/>
</dbReference>
<dbReference type="InterPro" id="IPR036388">
    <property type="entry name" value="WH-like_DNA-bd_sf"/>
</dbReference>
<dbReference type="InterPro" id="IPR036390">
    <property type="entry name" value="WH_DNA-bd_sf"/>
</dbReference>
<dbReference type="NCBIfam" id="TIGR03298">
    <property type="entry name" value="argP"/>
    <property type="match status" value="1"/>
</dbReference>
<dbReference type="NCBIfam" id="NF002964">
    <property type="entry name" value="PRK03635.1"/>
    <property type="match status" value="1"/>
</dbReference>
<dbReference type="NCBIfam" id="NF009888">
    <property type="entry name" value="PRK13348.1"/>
    <property type="match status" value="1"/>
</dbReference>
<dbReference type="PANTHER" id="PTHR30579:SF2">
    <property type="entry name" value="HTH-TYPE TRANSCRIPTIONAL REGULATOR ARGP"/>
    <property type="match status" value="1"/>
</dbReference>
<dbReference type="PANTHER" id="PTHR30579">
    <property type="entry name" value="TRANSCRIPTIONAL REGULATOR"/>
    <property type="match status" value="1"/>
</dbReference>
<dbReference type="Pfam" id="PF00126">
    <property type="entry name" value="HTH_1"/>
    <property type="match status" value="1"/>
</dbReference>
<dbReference type="Pfam" id="PF03466">
    <property type="entry name" value="LysR_substrate"/>
    <property type="match status" value="1"/>
</dbReference>
<dbReference type="PRINTS" id="PR00039">
    <property type="entry name" value="HTHLYSR"/>
</dbReference>
<dbReference type="SUPFAM" id="SSF53850">
    <property type="entry name" value="Periplasmic binding protein-like II"/>
    <property type="match status" value="1"/>
</dbReference>
<dbReference type="SUPFAM" id="SSF46785">
    <property type="entry name" value="Winged helix' DNA-binding domain"/>
    <property type="match status" value="1"/>
</dbReference>
<dbReference type="PROSITE" id="PS50931">
    <property type="entry name" value="HTH_LYSR"/>
    <property type="match status" value="1"/>
</dbReference>